<comment type="function">
    <text evidence="1">One of the primary rRNA binding proteins, it binds directly to 16S rRNA central domain where it helps coordinate assembly of the platform of the 30S subunit.</text>
</comment>
<comment type="subunit">
    <text evidence="1">Part of the 30S ribosomal subunit. Contacts proteins S5 and S12.</text>
</comment>
<comment type="similarity">
    <text evidence="1">Belongs to the universal ribosomal protein uS8 family.</text>
</comment>
<sequence>MVMTDPIADFLTRIRNANMAKHESLEVPASKIKRDIAEILKNEGFVRDVEYIDDDKQGIIRVFLKYGKGNERVISGIRRISKPGLRSYVKADAVPKVLNGLGIAILSTSEGVITDKEARAKKIGGEVIAYIW</sequence>
<evidence type="ECO:0000255" key="1">
    <source>
        <dbReference type="HAMAP-Rule" id="MF_01302"/>
    </source>
</evidence>
<evidence type="ECO:0000305" key="2"/>
<name>RS8_LIGS1</name>
<proteinExistence type="inferred from homology"/>
<reference key="1">
    <citation type="journal article" date="2006" name="Proc. Natl. Acad. Sci. U.S.A.">
        <title>Multireplicon genome architecture of Lactobacillus salivarius.</title>
        <authorList>
            <person name="Claesson M.J."/>
            <person name="Li Y."/>
            <person name="Leahy S."/>
            <person name="Canchaya C."/>
            <person name="van Pijkeren J.P."/>
            <person name="Cerdeno-Tarraga A.M."/>
            <person name="Parkhill J."/>
            <person name="Flynn S."/>
            <person name="O'Sullivan G.C."/>
            <person name="Collins J.K."/>
            <person name="Higgins D."/>
            <person name="Shanahan F."/>
            <person name="Fitzgerald G.F."/>
            <person name="van Sinderen D."/>
            <person name="O'Toole P.W."/>
        </authorList>
    </citation>
    <scope>NUCLEOTIDE SEQUENCE [LARGE SCALE GENOMIC DNA]</scope>
    <source>
        <strain>UCC118</strain>
    </source>
</reference>
<feature type="chain" id="PRO_0000290859" description="Small ribosomal subunit protein uS8">
    <location>
        <begin position="1"/>
        <end position="132"/>
    </location>
</feature>
<protein>
    <recommendedName>
        <fullName evidence="1">Small ribosomal subunit protein uS8</fullName>
    </recommendedName>
    <alternativeName>
        <fullName evidence="2">30S ribosomal protein S8</fullName>
    </alternativeName>
</protein>
<accession>Q1WSA4</accession>
<organism>
    <name type="scientific">Ligilactobacillus salivarius (strain UCC118)</name>
    <name type="common">Lactobacillus salivarius</name>
    <dbReference type="NCBI Taxonomy" id="362948"/>
    <lineage>
        <taxon>Bacteria</taxon>
        <taxon>Bacillati</taxon>
        <taxon>Bacillota</taxon>
        <taxon>Bacilli</taxon>
        <taxon>Lactobacillales</taxon>
        <taxon>Lactobacillaceae</taxon>
        <taxon>Ligilactobacillus</taxon>
    </lineage>
</organism>
<gene>
    <name evidence="1" type="primary">rpsH</name>
    <name type="ordered locus">LSL_1421</name>
</gene>
<keyword id="KW-1185">Reference proteome</keyword>
<keyword id="KW-0687">Ribonucleoprotein</keyword>
<keyword id="KW-0689">Ribosomal protein</keyword>
<keyword id="KW-0694">RNA-binding</keyword>
<keyword id="KW-0699">rRNA-binding</keyword>
<dbReference type="EMBL" id="CP000233">
    <property type="protein sequence ID" value="ABE00225.1"/>
    <property type="molecule type" value="Genomic_DNA"/>
</dbReference>
<dbReference type="RefSeq" id="WP_003701322.1">
    <property type="nucleotide sequence ID" value="NC_007929.1"/>
</dbReference>
<dbReference type="RefSeq" id="YP_536308.1">
    <property type="nucleotide sequence ID" value="NC_007929.1"/>
</dbReference>
<dbReference type="SMR" id="Q1WSA4"/>
<dbReference type="STRING" id="362948.LSL_1421"/>
<dbReference type="GeneID" id="89466156"/>
<dbReference type="KEGG" id="lsl:LSL_1421"/>
<dbReference type="PATRIC" id="fig|362948.14.peg.1504"/>
<dbReference type="HOGENOM" id="CLU_098428_0_2_9"/>
<dbReference type="OrthoDB" id="9802617at2"/>
<dbReference type="Proteomes" id="UP000006559">
    <property type="component" value="Chromosome"/>
</dbReference>
<dbReference type="GO" id="GO:1990904">
    <property type="term" value="C:ribonucleoprotein complex"/>
    <property type="evidence" value="ECO:0007669"/>
    <property type="project" value="UniProtKB-KW"/>
</dbReference>
<dbReference type="GO" id="GO:0005840">
    <property type="term" value="C:ribosome"/>
    <property type="evidence" value="ECO:0007669"/>
    <property type="project" value="UniProtKB-KW"/>
</dbReference>
<dbReference type="GO" id="GO:0019843">
    <property type="term" value="F:rRNA binding"/>
    <property type="evidence" value="ECO:0007669"/>
    <property type="project" value="UniProtKB-UniRule"/>
</dbReference>
<dbReference type="GO" id="GO:0003735">
    <property type="term" value="F:structural constituent of ribosome"/>
    <property type="evidence" value="ECO:0007669"/>
    <property type="project" value="InterPro"/>
</dbReference>
<dbReference type="GO" id="GO:0006412">
    <property type="term" value="P:translation"/>
    <property type="evidence" value="ECO:0007669"/>
    <property type="project" value="UniProtKB-UniRule"/>
</dbReference>
<dbReference type="FunFam" id="3.30.1370.30:FF:000002">
    <property type="entry name" value="30S ribosomal protein S8"/>
    <property type="match status" value="1"/>
</dbReference>
<dbReference type="FunFam" id="3.30.1490.10:FF:000001">
    <property type="entry name" value="30S ribosomal protein S8"/>
    <property type="match status" value="1"/>
</dbReference>
<dbReference type="Gene3D" id="3.30.1370.30">
    <property type="match status" value="1"/>
</dbReference>
<dbReference type="Gene3D" id="3.30.1490.10">
    <property type="match status" value="1"/>
</dbReference>
<dbReference type="HAMAP" id="MF_01302_B">
    <property type="entry name" value="Ribosomal_uS8_B"/>
    <property type="match status" value="1"/>
</dbReference>
<dbReference type="InterPro" id="IPR000630">
    <property type="entry name" value="Ribosomal_uS8"/>
</dbReference>
<dbReference type="InterPro" id="IPR047863">
    <property type="entry name" value="Ribosomal_uS8_CS"/>
</dbReference>
<dbReference type="InterPro" id="IPR035987">
    <property type="entry name" value="Ribosomal_uS8_sf"/>
</dbReference>
<dbReference type="NCBIfam" id="NF001109">
    <property type="entry name" value="PRK00136.1"/>
    <property type="match status" value="1"/>
</dbReference>
<dbReference type="PANTHER" id="PTHR11758">
    <property type="entry name" value="40S RIBOSOMAL PROTEIN S15A"/>
    <property type="match status" value="1"/>
</dbReference>
<dbReference type="Pfam" id="PF00410">
    <property type="entry name" value="Ribosomal_S8"/>
    <property type="match status" value="1"/>
</dbReference>
<dbReference type="SUPFAM" id="SSF56047">
    <property type="entry name" value="Ribosomal protein S8"/>
    <property type="match status" value="1"/>
</dbReference>
<dbReference type="PROSITE" id="PS00053">
    <property type="entry name" value="RIBOSOMAL_S8"/>
    <property type="match status" value="1"/>
</dbReference>